<proteinExistence type="inferred from homology"/>
<organism>
    <name type="scientific">Haloferax volcanii (strain ATCC 29605 / DSM 3757 / JCM 8879 / NBRC 14742 / NCIMB 2012 / VKM B-1768 / DS2)</name>
    <name type="common">Halobacterium volcanii</name>
    <dbReference type="NCBI Taxonomy" id="309800"/>
    <lineage>
        <taxon>Archaea</taxon>
        <taxon>Methanobacteriati</taxon>
        <taxon>Methanobacteriota</taxon>
        <taxon>Stenosarchaea group</taxon>
        <taxon>Halobacteria</taxon>
        <taxon>Halobacteriales</taxon>
        <taxon>Haloferacaceae</taxon>
        <taxon>Haloferax</taxon>
    </lineage>
</organism>
<evidence type="ECO:0000250" key="1">
    <source>
        <dbReference type="UniProtKB" id="P26392"/>
    </source>
</evidence>
<evidence type="ECO:0000269" key="2">
    <source>
    </source>
</evidence>
<evidence type="ECO:0000305" key="3"/>
<name>AGL14_HALVD</name>
<reference key="1">
    <citation type="journal article" date="2010" name="PLoS ONE">
        <title>The complete genome sequence of Haloferax volcanii DS2, a model archaeon.</title>
        <authorList>
            <person name="Hartman A.L."/>
            <person name="Norais C."/>
            <person name="Badger J.H."/>
            <person name="Delmas S."/>
            <person name="Haldenby S."/>
            <person name="Madupu R."/>
            <person name="Robinson J."/>
            <person name="Khouri H."/>
            <person name="Ren Q."/>
            <person name="Lowe T.M."/>
            <person name="Maupin-Furlow J."/>
            <person name="Pohlschroder M."/>
            <person name="Daniels C."/>
            <person name="Pfeiffer F."/>
            <person name="Allers T."/>
            <person name="Eisen J.A."/>
        </authorList>
    </citation>
    <scope>NUCLEOTIDE SEQUENCE [LARGE SCALE GENOMIC DNA]</scope>
    <source>
        <strain>ATCC 29605 / DSM 3757 / JCM 8879 / NBRC 14742 / NCIMB 2012 / VKM B-1768 / DS2</strain>
    </source>
</reference>
<reference key="2">
    <citation type="journal article" date="2014" name="PLoS Genet.">
        <title>Phylogenetically driven sequencing of extremely halophilic archaea reveals strategies for static and dynamic osmo-response.</title>
        <authorList>
            <person name="Becker E.A."/>
            <person name="Seitzer P.M."/>
            <person name="Tritt A."/>
            <person name="Larsen D."/>
            <person name="Krusor M."/>
            <person name="Yao A.I."/>
            <person name="Wu D."/>
            <person name="Madern D."/>
            <person name="Eisen J.A."/>
            <person name="Darling A.E."/>
            <person name="Facciotti M.T."/>
        </authorList>
    </citation>
    <scope>NUCLEOTIDE SEQUENCE [LARGE SCALE GENOMIC DNA]</scope>
    <source>
        <strain>ATCC 29605 / DSM 3757 / JCM 8879 / NBRC 14742 / NCIMB 2012 / VKM B-1768 / DS2</strain>
    </source>
</reference>
<reference key="3">
    <citation type="journal article" date="2013" name="MBio">
        <title>Two distinct N-glycosylation pathways process the Haloferax volcanii S-layer glycoprotein upon changes in environmental salinity.</title>
        <authorList>
            <person name="Kaminski L."/>
            <person name="Guan Z."/>
            <person name="Yurist-Doutsch S."/>
            <person name="Eichler J."/>
        </authorList>
    </citation>
    <scope>FUNCTION</scope>
    <scope>PATHWAY</scope>
    <scope>DISRUPTION PHENOTYPE</scope>
    <source>
        <strain>ATCC 29605 / DSM 3757 / JCM 8879 / NBRC 14742 / NCIMB 2012 / VKM B-1768 / DS2</strain>
    </source>
</reference>
<feature type="chain" id="PRO_0000428777" description="Probable low-salt glycan biosynthesis reductase Agl14">
    <location>
        <begin position="1"/>
        <end position="300"/>
    </location>
</feature>
<feature type="active site" description="Proton donor/acceptor" evidence="1">
    <location>
        <position position="135"/>
    </location>
</feature>
<feature type="binding site" evidence="1">
    <location>
        <begin position="10"/>
        <end position="12"/>
    </location>
    <ligand>
        <name>NADH</name>
        <dbReference type="ChEBI" id="CHEBI:57945"/>
    </ligand>
</feature>
<feature type="binding site" evidence="1">
    <location>
        <begin position="11"/>
        <end position="12"/>
    </location>
    <ligand>
        <name>NADPH</name>
        <dbReference type="ChEBI" id="CHEBI:57783"/>
    </ligand>
</feature>
<feature type="binding site" evidence="1">
    <location>
        <begin position="46"/>
        <end position="47"/>
    </location>
    <ligand>
        <name>NADH</name>
        <dbReference type="ChEBI" id="CHEBI:57945"/>
    </ligand>
</feature>
<feature type="binding site" evidence="1">
    <location>
        <begin position="46"/>
        <end position="47"/>
    </location>
    <ligand>
        <name>NADPH</name>
        <dbReference type="ChEBI" id="CHEBI:57783"/>
    </ligand>
</feature>
<feature type="binding site" evidence="1">
    <location>
        <begin position="70"/>
        <end position="72"/>
    </location>
    <ligand>
        <name>NADH</name>
        <dbReference type="ChEBI" id="CHEBI:57945"/>
    </ligand>
</feature>
<feature type="binding site" evidence="1">
    <location>
        <begin position="70"/>
        <end position="72"/>
    </location>
    <ligand>
        <name>NADPH</name>
        <dbReference type="ChEBI" id="CHEBI:57783"/>
    </ligand>
</feature>
<feature type="binding site" evidence="1">
    <location>
        <position position="109"/>
    </location>
    <ligand>
        <name>NADPH</name>
        <dbReference type="ChEBI" id="CHEBI:57783"/>
    </ligand>
</feature>
<feature type="binding site" evidence="1">
    <location>
        <position position="135"/>
    </location>
    <ligand>
        <name>NADH</name>
        <dbReference type="ChEBI" id="CHEBI:57945"/>
    </ligand>
</feature>
<feature type="binding site" evidence="1">
    <location>
        <position position="135"/>
    </location>
    <ligand>
        <name>NADPH</name>
        <dbReference type="ChEBI" id="CHEBI:57783"/>
    </ligand>
</feature>
<feature type="binding site" evidence="1">
    <location>
        <position position="139"/>
    </location>
    <ligand>
        <name>NADH</name>
        <dbReference type="ChEBI" id="CHEBI:57945"/>
    </ligand>
</feature>
<feature type="binding site" evidence="1">
    <location>
        <position position="139"/>
    </location>
    <ligand>
        <name>NADPH</name>
        <dbReference type="ChEBI" id="CHEBI:57783"/>
    </ligand>
</feature>
<gene>
    <name type="primary">agl14</name>
    <name type="ordered locus">HVO_2058</name>
</gene>
<protein>
    <recommendedName>
        <fullName>Probable low-salt glycan biosynthesis reductase Agl14</fullName>
        <ecNumber>1.1.1.-</ecNumber>
    </recommendedName>
</protein>
<comment type="function">
    <text evidence="2">Reductase involved in N-glycan biosynthetic pathway that takes place under low-salt conditions (1.75 M instead of 3.4 M). Participates in the formation of the tetrasaccharide present at 'Asn-532' of S-layer glycoprotein Csg, consisting of a sulfated hexose, 2 hexoses and rhamnose. Involved in the addition of final rhamnose (sugar 4) of the tetrasaccharide on the dolichol phosphate carrier.</text>
</comment>
<comment type="pathway">
    <text evidence="2">Protein modification; protein glycosylation.</text>
</comment>
<comment type="pathway">
    <text evidence="2">Cell surface structure biogenesis; S-layer biogenesis.</text>
</comment>
<comment type="disruption phenotype">
    <text evidence="2">Impaired formation of the tetrasaccharide present at 'Asn-532' of S-layer glycoprotein Csg. No effect on 'Asn-47' and 'Asn-117' glycosylation of S-layer glycoprotein Csg.</text>
</comment>
<comment type="similarity">
    <text evidence="3">Belongs to the dTDP-4-dehydrorhamnose reductase family.</text>
</comment>
<comment type="sequence caution" evidence="3">
    <conflict type="erroneous initiation">
        <sequence resource="EMBL-CDS" id="ELY33652"/>
    </conflict>
    <text>Truncated N-terminus.</text>
</comment>
<keyword id="KW-0520">NAD</keyword>
<keyword id="KW-0521">NADP</keyword>
<keyword id="KW-0560">Oxidoreductase</keyword>
<keyword id="KW-1185">Reference proteome</keyword>
<dbReference type="EC" id="1.1.1.-"/>
<dbReference type="EMBL" id="CP001956">
    <property type="protein sequence ID" value="ADE02982.1"/>
    <property type="molecule type" value="Genomic_DNA"/>
</dbReference>
<dbReference type="EMBL" id="AOHU01000040">
    <property type="protein sequence ID" value="ELY33652.1"/>
    <property type="status" value="ALT_INIT"/>
    <property type="molecule type" value="Genomic_DNA"/>
</dbReference>
<dbReference type="RefSeq" id="WP_013035334.1">
    <property type="nucleotide sequence ID" value="NC_013967.1"/>
</dbReference>
<dbReference type="SMR" id="D4GU71"/>
<dbReference type="STRING" id="309800.HVO_2058"/>
<dbReference type="PaxDb" id="309800-C498_05578"/>
<dbReference type="EnsemblBacteria" id="ADE02982">
    <property type="protein sequence ID" value="ADE02982"/>
    <property type="gene ID" value="HVO_2058"/>
</dbReference>
<dbReference type="GeneID" id="8924195"/>
<dbReference type="KEGG" id="hvo:HVO_2058"/>
<dbReference type="PATRIC" id="fig|309800.29.peg.1082"/>
<dbReference type="eggNOG" id="arCOG01367">
    <property type="taxonomic scope" value="Archaea"/>
</dbReference>
<dbReference type="HOGENOM" id="CLU_045518_2_1_2"/>
<dbReference type="OrthoDB" id="4907at2157"/>
<dbReference type="BioCyc" id="MetaCyc:MONOMER-18754"/>
<dbReference type="BRENDA" id="1.1.1.133">
    <property type="organism ID" value="2561"/>
</dbReference>
<dbReference type="UniPathway" id="UPA00378"/>
<dbReference type="UniPathway" id="UPA00977"/>
<dbReference type="Proteomes" id="UP000008243">
    <property type="component" value="Chromosome"/>
</dbReference>
<dbReference type="Proteomes" id="UP000011532">
    <property type="component" value="Unassembled WGS sequence"/>
</dbReference>
<dbReference type="GO" id="GO:0016491">
    <property type="term" value="F:oxidoreductase activity"/>
    <property type="evidence" value="ECO:0007669"/>
    <property type="project" value="UniProtKB-KW"/>
</dbReference>
<dbReference type="GO" id="GO:0006486">
    <property type="term" value="P:protein glycosylation"/>
    <property type="evidence" value="ECO:0007669"/>
    <property type="project" value="UniProtKB-UniPathway"/>
</dbReference>
<dbReference type="GO" id="GO:0045232">
    <property type="term" value="P:S-layer organization"/>
    <property type="evidence" value="ECO:0007669"/>
    <property type="project" value="UniProtKB-UniPathway"/>
</dbReference>
<dbReference type="CDD" id="cd05254">
    <property type="entry name" value="dTDP_HR_like_SDR_e"/>
    <property type="match status" value="1"/>
</dbReference>
<dbReference type="Gene3D" id="3.40.50.720">
    <property type="entry name" value="NAD(P)-binding Rossmann-like Domain"/>
    <property type="match status" value="1"/>
</dbReference>
<dbReference type="InterPro" id="IPR005913">
    <property type="entry name" value="dTDP_dehydrorham_reduct"/>
</dbReference>
<dbReference type="InterPro" id="IPR036291">
    <property type="entry name" value="NAD(P)-bd_dom_sf"/>
</dbReference>
<dbReference type="InterPro" id="IPR029903">
    <property type="entry name" value="RmlD-like-bd"/>
</dbReference>
<dbReference type="NCBIfam" id="TIGR01214">
    <property type="entry name" value="rmlD"/>
    <property type="match status" value="1"/>
</dbReference>
<dbReference type="PANTHER" id="PTHR10491">
    <property type="entry name" value="DTDP-4-DEHYDRORHAMNOSE REDUCTASE"/>
    <property type="match status" value="1"/>
</dbReference>
<dbReference type="PANTHER" id="PTHR10491:SF4">
    <property type="entry name" value="METHIONINE ADENOSYLTRANSFERASE 2 SUBUNIT BETA"/>
    <property type="match status" value="1"/>
</dbReference>
<dbReference type="Pfam" id="PF04321">
    <property type="entry name" value="RmlD_sub_bind"/>
    <property type="match status" value="1"/>
</dbReference>
<dbReference type="SUPFAM" id="SSF51735">
    <property type="entry name" value="NAD(P)-binding Rossmann-fold domains"/>
    <property type="match status" value="1"/>
</dbReference>
<accession>D4GU71</accession>
<accession>L9V9H5</accession>
<sequence>MYAFVTGANGLLGSVVVRTLREQGHAVVGSYHSEEPTFDCPLHQVDITDTERVVELLDEYDVDLVINCAAYTDVDGCESNPEVATAVNGTAPGDLAAVCDDREIPFIHYSTDYVFDGETDGFYEEGDEPAPIQEYGRSKLTGEHAVRDVNPDALILRLSFVYGARGDTSDLVGFPQWVASTLAAGDTVPLFTDQTMTPSRAGNVATTTLELLDAGVSGTFHVASQSAVTPSDFGEKICEVIGGDATLIESSVMADLDRPAARPRRSCLDVSNVEGELGCSQPTLEDDLAALEAAFSDYSS</sequence>